<name>CBID_BRUC2</name>
<dbReference type="EC" id="2.1.1.195" evidence="1"/>
<dbReference type="EMBL" id="CP000872">
    <property type="protein sequence ID" value="ABX62365.1"/>
    <property type="molecule type" value="Genomic_DNA"/>
</dbReference>
<dbReference type="RefSeq" id="WP_004689777.1">
    <property type="nucleotide sequence ID" value="NC_010103.1"/>
</dbReference>
<dbReference type="SMR" id="A9M5W0"/>
<dbReference type="KEGG" id="bcs:BCAN_A1321"/>
<dbReference type="HOGENOM" id="CLU_041273_0_0_5"/>
<dbReference type="PhylomeDB" id="A9M5W0"/>
<dbReference type="UniPathway" id="UPA00148">
    <property type="reaction ID" value="UER00227"/>
</dbReference>
<dbReference type="Proteomes" id="UP000001385">
    <property type="component" value="Chromosome I"/>
</dbReference>
<dbReference type="GO" id="GO:0043780">
    <property type="term" value="F:cobalt-precorrin-5B C1-methyltransferase activity"/>
    <property type="evidence" value="ECO:0007669"/>
    <property type="project" value="RHEA"/>
</dbReference>
<dbReference type="GO" id="GO:0019251">
    <property type="term" value="P:anaerobic cobalamin biosynthetic process"/>
    <property type="evidence" value="ECO:0007669"/>
    <property type="project" value="UniProtKB-UniRule"/>
</dbReference>
<dbReference type="GO" id="GO:0032259">
    <property type="term" value="P:methylation"/>
    <property type="evidence" value="ECO:0007669"/>
    <property type="project" value="UniProtKB-KW"/>
</dbReference>
<dbReference type="Gene3D" id="3.30.2110.10">
    <property type="entry name" value="CbiD-like"/>
    <property type="match status" value="1"/>
</dbReference>
<dbReference type="HAMAP" id="MF_00787">
    <property type="entry name" value="CbiD"/>
    <property type="match status" value="1"/>
</dbReference>
<dbReference type="InterPro" id="IPR002748">
    <property type="entry name" value="CbiD"/>
</dbReference>
<dbReference type="InterPro" id="IPR036074">
    <property type="entry name" value="CbiD_sf"/>
</dbReference>
<dbReference type="NCBIfam" id="TIGR00312">
    <property type="entry name" value="cbiD"/>
    <property type="match status" value="1"/>
</dbReference>
<dbReference type="NCBIfam" id="NF000849">
    <property type="entry name" value="PRK00075.1-1"/>
    <property type="match status" value="1"/>
</dbReference>
<dbReference type="PANTHER" id="PTHR35863">
    <property type="entry name" value="COBALT-PRECORRIN-5B C(1)-METHYLTRANSFERASE"/>
    <property type="match status" value="1"/>
</dbReference>
<dbReference type="PANTHER" id="PTHR35863:SF1">
    <property type="entry name" value="COBALT-PRECORRIN-5B C(1)-METHYLTRANSFERASE"/>
    <property type="match status" value="1"/>
</dbReference>
<dbReference type="Pfam" id="PF01888">
    <property type="entry name" value="CbiD"/>
    <property type="match status" value="1"/>
</dbReference>
<dbReference type="PIRSF" id="PIRSF026782">
    <property type="entry name" value="CbiD"/>
    <property type="match status" value="1"/>
</dbReference>
<dbReference type="SUPFAM" id="SSF111342">
    <property type="entry name" value="CbiD-like"/>
    <property type="match status" value="1"/>
</dbReference>
<evidence type="ECO:0000255" key="1">
    <source>
        <dbReference type="HAMAP-Rule" id="MF_00787"/>
    </source>
</evidence>
<reference key="1">
    <citation type="submission" date="2007-10" db="EMBL/GenBank/DDBJ databases">
        <title>Brucella canis ATCC 23365 whole genome shotgun sequencing project.</title>
        <authorList>
            <person name="Setubal J.C."/>
            <person name="Bowns C."/>
            <person name="Boyle S."/>
            <person name="Crasta O.R."/>
            <person name="Czar M.J."/>
            <person name="Dharmanolla C."/>
            <person name="Gillespie J.J."/>
            <person name="Kenyon R.W."/>
            <person name="Lu J."/>
            <person name="Mane S."/>
            <person name="Mohapatra S."/>
            <person name="Nagrani S."/>
            <person name="Purkayastha A."/>
            <person name="Rajasimha H.K."/>
            <person name="Shallom J.M."/>
            <person name="Shallom S."/>
            <person name="Shukla M."/>
            <person name="Snyder E.E."/>
            <person name="Sobral B.W."/>
            <person name="Wattam A.R."/>
            <person name="Will R."/>
            <person name="Williams K."/>
            <person name="Yoo H."/>
            <person name="Bruce D."/>
            <person name="Detter C."/>
            <person name="Munk C."/>
            <person name="Brettin T.S."/>
        </authorList>
    </citation>
    <scope>NUCLEOTIDE SEQUENCE [LARGE SCALE GENOMIC DNA]</scope>
    <source>
        <strain>ATCC 23365 / NCTC 10854 / RM-666</strain>
    </source>
</reference>
<protein>
    <recommendedName>
        <fullName evidence="1">Cobalt-precorrin-5B C(1)-methyltransferase</fullName>
        <ecNumber evidence="1">2.1.1.195</ecNumber>
    </recommendedName>
    <alternativeName>
        <fullName evidence="1">Cobalt-precorrin-6A synthase</fullName>
    </alternativeName>
</protein>
<gene>
    <name evidence="1" type="primary">cbiD</name>
    <name type="ordered locus">BCAN_A1321</name>
</gene>
<accession>A9M5W0</accession>
<organism>
    <name type="scientific">Brucella canis (strain ATCC 23365 / NCTC 10854 / RM-666)</name>
    <dbReference type="NCBI Taxonomy" id="483179"/>
    <lineage>
        <taxon>Bacteria</taxon>
        <taxon>Pseudomonadati</taxon>
        <taxon>Pseudomonadota</taxon>
        <taxon>Alphaproteobacteria</taxon>
        <taxon>Hyphomicrobiales</taxon>
        <taxon>Brucellaceae</taxon>
        <taxon>Brucella/Ochrobactrum group</taxon>
        <taxon>Brucella</taxon>
    </lineage>
</organism>
<feature type="chain" id="PRO_1000083589" description="Cobalt-precorrin-5B C(1)-methyltransferase">
    <location>
        <begin position="1"/>
        <end position="368"/>
    </location>
</feature>
<comment type="function">
    <text evidence="1">Catalyzes the methylation of C-1 in cobalt-precorrin-5B to form cobalt-precorrin-6A.</text>
</comment>
<comment type="catalytic activity">
    <reaction evidence="1">
        <text>Co-precorrin-5B + S-adenosyl-L-methionine = Co-precorrin-6A + S-adenosyl-L-homocysteine</text>
        <dbReference type="Rhea" id="RHEA:26285"/>
        <dbReference type="ChEBI" id="CHEBI:57856"/>
        <dbReference type="ChEBI" id="CHEBI:59789"/>
        <dbReference type="ChEBI" id="CHEBI:60063"/>
        <dbReference type="ChEBI" id="CHEBI:60064"/>
        <dbReference type="EC" id="2.1.1.195"/>
    </reaction>
</comment>
<comment type="pathway">
    <text evidence="1">Cofactor biosynthesis; adenosylcobalamin biosynthesis; cob(II)yrinate a,c-diamide from sirohydrochlorin (anaerobic route): step 6/10.</text>
</comment>
<comment type="similarity">
    <text evidence="1">Belongs to the CbiD family.</text>
</comment>
<proteinExistence type="inferred from homology"/>
<keyword id="KW-0169">Cobalamin biosynthesis</keyword>
<keyword id="KW-0489">Methyltransferase</keyword>
<keyword id="KW-1185">Reference proteome</keyword>
<keyword id="KW-0949">S-adenosyl-L-methionine</keyword>
<keyword id="KW-0808">Transferase</keyword>
<sequence length="368" mass="38588">MNDETTPANKNPEKAELRCGWTTGACATAATKAALTALITGEFPDPVGIILPKGEVPYFQLAYEGLGEGYAMAGIVKDAGDDPDVTHGATIISTVYPAPPGTGIIFRAGEGVGTVTREGLAIPPGEAAINPVPRRMMTEICEAICAEYGLPADLVITISVPGGEEIAQKTWNPRLGIIGGISILGTTGVVHPFSCSAWIHSIHRGIDVARAAGQKHVLGATGSTSEDAAQALYNLPDFAILDMGDFAGGVLKYLREHPIDRLTIAGGFAKLTKLAQGALDLHSSRSQVDKGFLWQIAERAGAPADMKERILLANTAMEVLELTQSIGIDIAGPIALEARQTALKTLRGAPVEVEIIVTDRKGNILARV</sequence>